<reference key="1">
    <citation type="journal article" date="2009" name="PLoS Biol.">
        <title>Lineage-specific biology revealed by a finished genome assembly of the mouse.</title>
        <authorList>
            <person name="Church D.M."/>
            <person name="Goodstadt L."/>
            <person name="Hillier L.W."/>
            <person name="Zody M.C."/>
            <person name="Goldstein S."/>
            <person name="She X."/>
            <person name="Bult C.J."/>
            <person name="Agarwala R."/>
            <person name="Cherry J.L."/>
            <person name="DiCuccio M."/>
            <person name="Hlavina W."/>
            <person name="Kapustin Y."/>
            <person name="Meric P."/>
            <person name="Maglott D."/>
            <person name="Birtle Z."/>
            <person name="Marques A.C."/>
            <person name="Graves T."/>
            <person name="Zhou S."/>
            <person name="Teague B."/>
            <person name="Potamousis K."/>
            <person name="Churas C."/>
            <person name="Place M."/>
            <person name="Herschleb J."/>
            <person name="Runnheim R."/>
            <person name="Forrest D."/>
            <person name="Amos-Landgraf J."/>
            <person name="Schwartz D.C."/>
            <person name="Cheng Z."/>
            <person name="Lindblad-Toh K."/>
            <person name="Eichler E.E."/>
            <person name="Ponting C.P."/>
        </authorList>
    </citation>
    <scope>NUCLEOTIDE SEQUENCE [LARGE SCALE GENOMIC DNA]</scope>
    <scope>ALTERNATIVE SPLICING (ISOFORMS 2 AND 3)</scope>
    <source>
        <strain>C57BL/6J</strain>
    </source>
</reference>
<reference key="2">
    <citation type="submission" date="2005-07" db="EMBL/GenBank/DDBJ databases">
        <authorList>
            <person name="Mural R.J."/>
            <person name="Adams M.D."/>
            <person name="Myers E.W."/>
            <person name="Smith H.O."/>
            <person name="Venter J.C."/>
        </authorList>
    </citation>
    <scope>NUCLEOTIDE SEQUENCE [LARGE SCALE GENOMIC DNA]</scope>
</reference>
<reference key="3">
    <citation type="journal article" date="2004" name="Genome Res.">
        <title>The status, quality, and expansion of the NIH full-length cDNA project: the Mammalian Gene Collection (MGC).</title>
        <authorList>
            <consortium name="The MGC Project Team"/>
        </authorList>
    </citation>
    <scope>NUCLEOTIDE SEQUENCE [LARGE SCALE MRNA] (ISOFORM 3)</scope>
    <source>
        <tissue>Brain</tissue>
    </source>
</reference>
<reference key="4">
    <citation type="journal article" date="2011" name="J. Cell. Mol. Med.">
        <title>The novel protein MANI modulates neurogenesis and neurite-cone growth.</title>
        <authorList>
            <person name="Mishra M."/>
            <person name="Akatsu H."/>
            <person name="Heese K."/>
        </authorList>
    </citation>
    <scope>INTERACTION WITH FAM168B</scope>
</reference>
<proteinExistence type="evidence at protein level"/>
<dbReference type="EMBL" id="AL603709">
    <property type="status" value="NOT_ANNOTATED_CDS"/>
    <property type="molecule type" value="Genomic_DNA"/>
</dbReference>
<dbReference type="EMBL" id="CH466558">
    <property type="protein sequence ID" value="EDL34221.1"/>
    <property type="molecule type" value="Genomic_DNA"/>
</dbReference>
<dbReference type="EMBL" id="BC157955">
    <property type="protein sequence ID" value="AAI57956.1"/>
    <property type="molecule type" value="mRNA"/>
</dbReference>
<dbReference type="EMBL" id="BC172100">
    <property type="protein sequence ID" value="AAI72100.1"/>
    <property type="molecule type" value="mRNA"/>
</dbReference>
<dbReference type="CCDS" id="CCDS36354.1">
    <molecule id="A2A6Q5-1"/>
</dbReference>
<dbReference type="RefSeq" id="NP_001272917.1">
    <molecule id="A2A6Q5-2"/>
    <property type="nucleotide sequence ID" value="NM_001285988.2"/>
</dbReference>
<dbReference type="RefSeq" id="NP_663411.2">
    <molecule id="A2A6Q5-1"/>
    <property type="nucleotide sequence ID" value="NM_145436.2"/>
</dbReference>
<dbReference type="RefSeq" id="XP_006533113.1">
    <molecule id="A2A6Q5-3"/>
    <property type="nucleotide sequence ID" value="XM_006533050.4"/>
</dbReference>
<dbReference type="SMR" id="A2A6Q5"/>
<dbReference type="BioGRID" id="229869">
    <property type="interactions" value="8"/>
</dbReference>
<dbReference type="DIP" id="DIP-56609N"/>
<dbReference type="FunCoup" id="A2A6Q5">
    <property type="interactions" value="5410"/>
</dbReference>
<dbReference type="IntAct" id="A2A6Q5">
    <property type="interactions" value="4"/>
</dbReference>
<dbReference type="STRING" id="10090.ENSMUSP00000091452"/>
<dbReference type="GlyGen" id="A2A6Q5">
    <property type="glycosylation" value="1 site"/>
</dbReference>
<dbReference type="iPTMnet" id="A2A6Q5"/>
<dbReference type="PhosphoSitePlus" id="A2A6Q5"/>
<dbReference type="PaxDb" id="10090-ENSMUSP00000091452"/>
<dbReference type="PeptideAtlas" id="A2A6Q5"/>
<dbReference type="ProteomicsDB" id="280030">
    <molecule id="A2A6Q5-1"/>
</dbReference>
<dbReference type="ProteomicsDB" id="280031">
    <molecule id="A2A6Q5-2"/>
</dbReference>
<dbReference type="ProteomicsDB" id="280032">
    <molecule id="A2A6Q5-3"/>
</dbReference>
<dbReference type="Pumba" id="A2A6Q5"/>
<dbReference type="Antibodypedia" id="3817">
    <property type="antibodies" value="495 antibodies from 42 providers"/>
</dbReference>
<dbReference type="DNASU" id="217232"/>
<dbReference type="Ensembl" id="ENSMUST00000093923.9">
    <molecule id="A2A6Q5-1"/>
    <property type="protein sequence ID" value="ENSMUSP00000091452.3"/>
    <property type="gene ID" value="ENSMUSG00000020687.14"/>
</dbReference>
<dbReference type="Ensembl" id="ENSMUST00000106962.9">
    <molecule id="A2A6Q5-3"/>
    <property type="protein sequence ID" value="ENSMUSP00000102575.3"/>
    <property type="gene ID" value="ENSMUSG00000020687.14"/>
</dbReference>
<dbReference type="GeneID" id="217232"/>
<dbReference type="KEGG" id="mmu:217232"/>
<dbReference type="UCSC" id="uc007lwq.2">
    <molecule id="A2A6Q5-1"/>
    <property type="organism name" value="mouse"/>
</dbReference>
<dbReference type="UCSC" id="uc007lwr.2">
    <molecule id="A2A6Q5-2"/>
    <property type="organism name" value="mouse"/>
</dbReference>
<dbReference type="UCSC" id="uc011ygc.2">
    <molecule id="A2A6Q5-3"/>
    <property type="organism name" value="mouse"/>
</dbReference>
<dbReference type="AGR" id="MGI:102685"/>
<dbReference type="CTD" id="996"/>
<dbReference type="MGI" id="MGI:102685">
    <property type="gene designation" value="Cdc27"/>
</dbReference>
<dbReference type="VEuPathDB" id="HostDB:ENSMUSG00000020687"/>
<dbReference type="eggNOG" id="KOG1126">
    <property type="taxonomic scope" value="Eukaryota"/>
</dbReference>
<dbReference type="GeneTree" id="ENSGT00950000182950"/>
<dbReference type="HOGENOM" id="CLU_008850_1_0_1"/>
<dbReference type="InParanoid" id="A2A6Q5"/>
<dbReference type="OMA" id="WHSPQAW"/>
<dbReference type="OrthoDB" id="23447at9989"/>
<dbReference type="PhylomeDB" id="A2A6Q5"/>
<dbReference type="TreeFam" id="TF101058"/>
<dbReference type="Reactome" id="R-MMU-141430">
    <property type="pathway name" value="Inactivation of APC/C via direct inhibition of the APC/C complex"/>
</dbReference>
<dbReference type="Reactome" id="R-MMU-174048">
    <property type="pathway name" value="APC/C:Cdc20 mediated degradation of Cyclin B"/>
</dbReference>
<dbReference type="Reactome" id="R-MMU-174084">
    <property type="pathway name" value="Autodegradation of Cdh1 by Cdh1:APC/C"/>
</dbReference>
<dbReference type="Reactome" id="R-MMU-174154">
    <property type="pathway name" value="APC/C:Cdc20 mediated degradation of Securin"/>
</dbReference>
<dbReference type="Reactome" id="R-MMU-174178">
    <property type="pathway name" value="APC/C:Cdh1 mediated degradation of Cdc20 and other APC/C:Cdh1 targeted proteins in late mitosis/early G1"/>
</dbReference>
<dbReference type="Reactome" id="R-MMU-174184">
    <property type="pathway name" value="Cdc20:Phospho-APC/C mediated degradation of Cyclin A"/>
</dbReference>
<dbReference type="Reactome" id="R-MMU-176407">
    <property type="pathway name" value="Conversion from APC/C:Cdc20 to APC/C:Cdh1 in late anaphase"/>
</dbReference>
<dbReference type="Reactome" id="R-MMU-176408">
    <property type="pathway name" value="Regulation of APC/C activators between G1/S and early anaphase"/>
</dbReference>
<dbReference type="Reactome" id="R-MMU-176409">
    <property type="pathway name" value="APC/C:Cdc20 mediated degradation of mitotic proteins"/>
</dbReference>
<dbReference type="Reactome" id="R-MMU-176412">
    <property type="pathway name" value="Phosphorylation of the APC/C"/>
</dbReference>
<dbReference type="Reactome" id="R-MMU-179409">
    <property type="pathway name" value="APC-Cdc20 mediated degradation of Nek2A"/>
</dbReference>
<dbReference type="Reactome" id="R-MMU-2467813">
    <property type="pathway name" value="Separation of Sister Chromatids"/>
</dbReference>
<dbReference type="Reactome" id="R-MMU-2559582">
    <property type="pathway name" value="Senescence-Associated Secretory Phenotype (SASP)"/>
</dbReference>
<dbReference type="Reactome" id="R-MMU-68867">
    <property type="pathway name" value="Assembly of the pre-replicative complex"/>
</dbReference>
<dbReference type="Reactome" id="R-MMU-69017">
    <property type="pathway name" value="CDK-mediated phosphorylation and removal of Cdc6"/>
</dbReference>
<dbReference type="Reactome" id="R-MMU-983168">
    <property type="pathway name" value="Antigen processing: Ubiquitination &amp; Proteasome degradation"/>
</dbReference>
<dbReference type="UniPathway" id="UPA00143"/>
<dbReference type="BioGRID-ORCS" id="217232">
    <property type="hits" value="27 hits in 79 CRISPR screens"/>
</dbReference>
<dbReference type="ChiTaRS" id="Cdc27">
    <property type="organism name" value="mouse"/>
</dbReference>
<dbReference type="PRO" id="PR:A2A6Q5"/>
<dbReference type="Proteomes" id="UP000000589">
    <property type="component" value="Chromosome 11"/>
</dbReference>
<dbReference type="RNAct" id="A2A6Q5">
    <property type="molecule type" value="protein"/>
</dbReference>
<dbReference type="Bgee" id="ENSMUSG00000020687">
    <property type="expression patterns" value="Expressed in undifferentiated genital tubercle and 222 other cell types or tissues"/>
</dbReference>
<dbReference type="ExpressionAtlas" id="A2A6Q5">
    <property type="expression patterns" value="baseline and differential"/>
</dbReference>
<dbReference type="GO" id="GO:0005680">
    <property type="term" value="C:anaphase-promoting complex"/>
    <property type="evidence" value="ECO:0000250"/>
    <property type="project" value="UniProtKB"/>
</dbReference>
<dbReference type="GO" id="GO:0005813">
    <property type="term" value="C:centrosome"/>
    <property type="evidence" value="ECO:0000266"/>
    <property type="project" value="MGI"/>
</dbReference>
<dbReference type="GO" id="GO:0005737">
    <property type="term" value="C:cytoplasm"/>
    <property type="evidence" value="ECO:0007669"/>
    <property type="project" value="UniProtKB-KW"/>
</dbReference>
<dbReference type="GO" id="GO:0072686">
    <property type="term" value="C:mitotic spindle"/>
    <property type="evidence" value="ECO:0000266"/>
    <property type="project" value="MGI"/>
</dbReference>
<dbReference type="GO" id="GO:0005654">
    <property type="term" value="C:nucleoplasm"/>
    <property type="evidence" value="ECO:0007669"/>
    <property type="project" value="Ensembl"/>
</dbReference>
<dbReference type="GO" id="GO:0005634">
    <property type="term" value="C:nucleus"/>
    <property type="evidence" value="ECO:0000250"/>
    <property type="project" value="UniProtKB"/>
</dbReference>
<dbReference type="GO" id="GO:0005819">
    <property type="term" value="C:spindle"/>
    <property type="evidence" value="ECO:0000250"/>
    <property type="project" value="UniProtKB"/>
</dbReference>
<dbReference type="GO" id="GO:0019903">
    <property type="term" value="F:protein phosphatase binding"/>
    <property type="evidence" value="ECO:0007669"/>
    <property type="project" value="Ensembl"/>
</dbReference>
<dbReference type="GO" id="GO:0031145">
    <property type="term" value="P:anaphase-promoting complex-dependent catabolic process"/>
    <property type="evidence" value="ECO:0000250"/>
    <property type="project" value="UniProtKB"/>
</dbReference>
<dbReference type="GO" id="GO:0007091">
    <property type="term" value="P:metaphase/anaphase transition of mitotic cell cycle"/>
    <property type="evidence" value="ECO:0000266"/>
    <property type="project" value="MGI"/>
</dbReference>
<dbReference type="GO" id="GO:0031175">
    <property type="term" value="P:neuron projection development"/>
    <property type="evidence" value="ECO:0000315"/>
    <property type="project" value="MGI"/>
</dbReference>
<dbReference type="GO" id="GO:0141198">
    <property type="term" value="P:protein branched polyubiquitination"/>
    <property type="evidence" value="ECO:0000250"/>
    <property type="project" value="UniProtKB"/>
</dbReference>
<dbReference type="GO" id="GO:0070979">
    <property type="term" value="P:protein K11-linked ubiquitination"/>
    <property type="evidence" value="ECO:0000250"/>
    <property type="project" value="UniProtKB"/>
</dbReference>
<dbReference type="GO" id="GO:0070936">
    <property type="term" value="P:protein K48-linked ubiquitination"/>
    <property type="evidence" value="ECO:0000250"/>
    <property type="project" value="UniProtKB"/>
</dbReference>
<dbReference type="FunFam" id="1.25.40.10:FF:000085">
    <property type="entry name" value="Cell division cycle 27 homolog (S. cerevisiae)"/>
    <property type="match status" value="1"/>
</dbReference>
<dbReference type="FunFam" id="1.25.40.10:FF:000018">
    <property type="entry name" value="Cell division cycle protein 27 homolog B"/>
    <property type="match status" value="1"/>
</dbReference>
<dbReference type="FunFam" id="1.25.40.10:FF:000045">
    <property type="entry name" value="Cell division cycle protein 27 isoform X3"/>
    <property type="match status" value="1"/>
</dbReference>
<dbReference type="FunFam" id="1.25.40.10:FF:000051">
    <property type="entry name" value="Cell division cycle protein 27 isoform X3"/>
    <property type="match status" value="1"/>
</dbReference>
<dbReference type="Gene3D" id="1.25.40.10">
    <property type="entry name" value="Tetratricopeptide repeat domain"/>
    <property type="match status" value="4"/>
</dbReference>
<dbReference type="InterPro" id="IPR011990">
    <property type="entry name" value="TPR-like_helical_dom_sf"/>
</dbReference>
<dbReference type="InterPro" id="IPR019734">
    <property type="entry name" value="TPR_rpt"/>
</dbReference>
<dbReference type="PANTHER" id="PTHR12558">
    <property type="entry name" value="CELL DIVISION CYCLE 16,23,27"/>
    <property type="match status" value="1"/>
</dbReference>
<dbReference type="PANTHER" id="PTHR12558:SF13">
    <property type="entry name" value="CELL DIVISION CYCLE PROTEIN 27 HOMOLOG"/>
    <property type="match status" value="1"/>
</dbReference>
<dbReference type="Pfam" id="PF12895">
    <property type="entry name" value="ANAPC3"/>
    <property type="match status" value="1"/>
</dbReference>
<dbReference type="Pfam" id="PF00515">
    <property type="entry name" value="TPR_1"/>
    <property type="match status" value="2"/>
</dbReference>
<dbReference type="Pfam" id="PF13181">
    <property type="entry name" value="TPR_8"/>
    <property type="match status" value="2"/>
</dbReference>
<dbReference type="SMART" id="SM00028">
    <property type="entry name" value="TPR"/>
    <property type="match status" value="8"/>
</dbReference>
<dbReference type="SUPFAM" id="SSF48452">
    <property type="entry name" value="TPR-like"/>
    <property type="match status" value="2"/>
</dbReference>
<dbReference type="PROSITE" id="PS50005">
    <property type="entry name" value="TPR"/>
    <property type="match status" value="8"/>
</dbReference>
<dbReference type="PROSITE" id="PS50293">
    <property type="entry name" value="TPR_REGION"/>
    <property type="match status" value="2"/>
</dbReference>
<protein>
    <recommendedName>
        <fullName>Cell division cycle protein 27 homolog</fullName>
    </recommendedName>
</protein>
<organism>
    <name type="scientific">Mus musculus</name>
    <name type="common">Mouse</name>
    <dbReference type="NCBI Taxonomy" id="10090"/>
    <lineage>
        <taxon>Eukaryota</taxon>
        <taxon>Metazoa</taxon>
        <taxon>Chordata</taxon>
        <taxon>Craniata</taxon>
        <taxon>Vertebrata</taxon>
        <taxon>Euteleostomi</taxon>
        <taxon>Mammalia</taxon>
        <taxon>Eutheria</taxon>
        <taxon>Euarchontoglires</taxon>
        <taxon>Glires</taxon>
        <taxon>Rodentia</taxon>
        <taxon>Myomorpha</taxon>
        <taxon>Muroidea</taxon>
        <taxon>Muridae</taxon>
        <taxon>Murinae</taxon>
        <taxon>Mus</taxon>
        <taxon>Mus</taxon>
    </lineage>
</organism>
<name>CDC27_MOUSE</name>
<sequence>MTVLQEPVQAAIWQALNHYAYRDAVFLAERLYAEVHSEEALFLLATCYYRSGKAYKAYRLLKGHSCTTPQCKYLLAKCCVDLSKLAEGEQILSGGVFNKQKSHDDLVTEFGDSACFTLSLLGHVYCKTDRLAKGSECYQKSLSLNPFLWSPFESLCEIGEKPDPDQTFKLTSLQNFSSCLPNTCTTLVSNHSLSHRQPETVLTETPQDTIELNRLNLESSNSKYSLNTDSSVSYIDSTVISPDNVPLGPGTAILSKQVQNKPKTGRSLLGGPTALSPLTPSFGILPLETPSPGDGSYLQNYTNTPSVIDVAPTGAPTKKSVARMGQTGTKSVFSQSGNSREVTPVLVAQTQSSGPQTSTTPQVLSPTITSPPNALPRRSSRLFTSDSSTTKENSKKLKMKFPPKIPNRKTKSKTNKGGLTQPSINDSLEITKLDSSIISEGKITTVTPQIQAFNLQKAAAEGLMSLLREMGKGYLALCSYNCKEAINILSHLPSHHYSTGWVLCQIGRAYFELSEYMQAERIFSEVRRIESFRVEGMEIYSTTLWHLQKDVALSVLSKDLTDMDKNSPEAWCAAGNCFSLQREHDIAIKFFQRAIQVDPNYAYAYTLLGHEFVLTEELDKALACFRNAIRVNPRHYNAWYGLGMIYYKQEKFSLAEMHFQKALDINPQSSVLLCHIGVVQHALKKSEKALDTLNKAIVIDPKNPLCKFHRASVLFANEKYKSALQELEELKQIVPKESLVYFLIGKVYKKLGQTHLALMNFSWAMDLDPKGANNQIKEAIDKRYLPDDEEPITQEEQIMGTDESQESSMTDADDTQLHAAESDEF</sequence>
<gene>
    <name type="primary">Cdc27</name>
</gene>
<comment type="function">
    <text evidence="1">Component of the anaphase promoting complex/cyclosome (APC/C), a cell cycle-regulated E3 ubiquitin ligase that controls progression through mitosis and the G1 phase of the cell cycle. The APC/C complex acts by mediating ubiquitination and subsequent degradation of target proteins: it mainly mediates the formation of 'Lys-11'-linked polyubiquitin chains and, to a lower extent, the formation of 'Lys-48'- and 'Lys-63'-linked polyubiquitin chains. The APC/C complex catalyzes assembly of branched 'Lys-11'-/'Lys-48'-linked branched ubiquitin chains on target proteins.</text>
</comment>
<comment type="pathway">
    <text evidence="1">Protein modification; protein ubiquitination.</text>
</comment>
<comment type="subunit">
    <text evidence="1 3">Homodimer. The mammalian APC/C is composed at least of 14 distinct subunits ANAPC1, ANAPC2, CDC27/APC3, ANAPC4, ANAPC5, CDC16/APC6, ANAPC7, CDC23/APC8, ANAPC10, ANAPC11, CDC26/APC12, ANAPC13, ANAPC15 and ANAPC16 that assemble into a complex of at least 19 chains with a combined molecular mass of around 1.2 MDa; APC/C interacts with FZR1 and FBXO5 (By similarity). Interacts with RB. Interacts with FAM168B/MANI (PubMed:20716133). Interacts with MCPH1 (By similarity).</text>
</comment>
<comment type="subcellular location">
    <subcellularLocation>
        <location evidence="1">Nucleus</location>
    </subcellularLocation>
    <subcellularLocation>
        <location evidence="1">Cytoplasm</location>
        <location evidence="1">Cytoskeleton</location>
        <location evidence="1">Spindle</location>
    </subcellularLocation>
</comment>
<comment type="alternative products">
    <event type="alternative splicing"/>
    <isoform>
        <id>A2A6Q5-1</id>
        <name>1</name>
        <sequence type="displayed"/>
    </isoform>
    <isoform>
        <id>A2A6Q5-2</id>
        <name>2</name>
        <sequence type="described" ref="VSP_038534 VSP_038535"/>
    </isoform>
    <isoform>
        <id>A2A6Q5-3</id>
        <name>3</name>
        <sequence type="described" ref="VSP_038534"/>
    </isoform>
</comment>
<comment type="PTM">
    <text evidence="1">Phosphorylated. Phosphorylation on Ser-427 and Thr-447 occurs specifically during mitosis (By similarity).</text>
</comment>
<comment type="similarity">
    <text evidence="5">Belongs to the APC3/CDC27 family.</text>
</comment>
<keyword id="KW-0025">Alternative splicing</keyword>
<keyword id="KW-0963">Cytoplasm</keyword>
<keyword id="KW-0206">Cytoskeleton</keyword>
<keyword id="KW-0539">Nucleus</keyword>
<keyword id="KW-0597">Phosphoprotein</keyword>
<keyword id="KW-1185">Reference proteome</keyword>
<keyword id="KW-0677">Repeat</keyword>
<keyword id="KW-0802">TPR repeat</keyword>
<keyword id="KW-0833">Ubl conjugation pathway</keyword>
<accession>A2A6Q5</accession>
<accession>A2A6Q6</accession>
<accession>B2RXS0</accession>
<feature type="chain" id="PRO_0000390473" description="Cell division cycle protein 27 homolog">
    <location>
        <begin position="1"/>
        <end position="825"/>
    </location>
</feature>
<feature type="repeat" description="TPR 1">
    <location>
        <begin position="6"/>
        <end position="35"/>
    </location>
</feature>
<feature type="repeat" description="TPR 2">
    <location>
        <begin position="38"/>
        <end position="65"/>
    </location>
</feature>
<feature type="repeat" description="TPR 3">
    <location>
        <begin position="67"/>
        <end position="99"/>
    </location>
</feature>
<feature type="repeat" description="TPR 4">
    <location>
        <begin position="115"/>
        <end position="145"/>
    </location>
</feature>
<feature type="repeat" description="TPR 5">
    <location>
        <begin position="465"/>
        <end position="495"/>
    </location>
</feature>
<feature type="repeat" description="TPR 6">
    <location>
        <begin position="499"/>
        <end position="528"/>
    </location>
</feature>
<feature type="repeat" description="TPR 7">
    <location>
        <begin position="533"/>
        <end position="563"/>
    </location>
</feature>
<feature type="repeat" description="TPR 8">
    <location>
        <begin position="567"/>
        <end position="598"/>
    </location>
</feature>
<feature type="repeat" description="TPR 9">
    <location>
        <begin position="601"/>
        <end position="631"/>
    </location>
</feature>
<feature type="repeat" description="TPR 10">
    <location>
        <begin position="635"/>
        <end position="667"/>
    </location>
</feature>
<feature type="repeat" description="TPR 11">
    <location>
        <begin position="670"/>
        <end position="702"/>
    </location>
</feature>
<feature type="repeat" description="TPR 12">
    <location>
        <begin position="704"/>
        <end position="734"/>
    </location>
</feature>
<feature type="repeat" description="TPR 13">
    <location>
        <begin position="737"/>
        <end position="768"/>
    </location>
</feature>
<feature type="region of interest" description="Disordered" evidence="2">
    <location>
        <begin position="306"/>
        <end position="423"/>
    </location>
</feature>
<feature type="region of interest" description="Disordered" evidence="2">
    <location>
        <begin position="782"/>
        <end position="825"/>
    </location>
</feature>
<feature type="compositionally biased region" description="Polar residues" evidence="2">
    <location>
        <begin position="326"/>
        <end position="341"/>
    </location>
</feature>
<feature type="compositionally biased region" description="Low complexity" evidence="2">
    <location>
        <begin position="349"/>
        <end position="362"/>
    </location>
</feature>
<feature type="compositionally biased region" description="Polar residues" evidence="2">
    <location>
        <begin position="363"/>
        <end position="372"/>
    </location>
</feature>
<feature type="compositionally biased region" description="Polar residues" evidence="2">
    <location>
        <begin position="381"/>
        <end position="391"/>
    </location>
</feature>
<feature type="compositionally biased region" description="Basic residues" evidence="2">
    <location>
        <begin position="396"/>
        <end position="414"/>
    </location>
</feature>
<feature type="modified residue" description="Phosphothreonine" evidence="1">
    <location>
        <position position="205"/>
    </location>
</feature>
<feature type="modified residue" description="Phosphothreonine" evidence="1">
    <location>
        <position position="209"/>
    </location>
</feature>
<feature type="modified residue" description="Phosphoserine" evidence="1">
    <location>
        <position position="291"/>
    </location>
</feature>
<feature type="modified residue" description="Phosphothreonine" evidence="1">
    <location>
        <position position="313"/>
    </location>
</feature>
<feature type="modified residue" description="Phosphoserine" evidence="1">
    <location>
        <position position="339"/>
    </location>
</feature>
<feature type="modified residue" description="Phosphothreonine" evidence="1">
    <location>
        <position position="367"/>
    </location>
</feature>
<feature type="modified residue" description="Phosphoserine" evidence="1">
    <location>
        <position position="380"/>
    </location>
</feature>
<feature type="modified residue" description="Phosphoserine" evidence="1">
    <location>
        <position position="387"/>
    </location>
</feature>
<feature type="modified residue" description="Phosphoserine" evidence="1">
    <location>
        <position position="427"/>
    </location>
</feature>
<feature type="modified residue" description="Phosphothreonine" evidence="1">
    <location>
        <position position="431"/>
    </location>
</feature>
<feature type="modified residue" description="Phosphoserine" evidence="1">
    <location>
        <position position="436"/>
    </location>
</feature>
<feature type="modified residue" description="Phosphoserine" evidence="1">
    <location>
        <position position="439"/>
    </location>
</feature>
<feature type="modified residue" description="Phosphothreonine" evidence="1">
    <location>
        <position position="447"/>
    </location>
</feature>
<feature type="modified residue" description="Phosphoserine" evidence="1">
    <location>
        <position position="822"/>
    </location>
</feature>
<feature type="splice variant" id="VSP_038534" description="In isoform 2 and isoform 3." evidence="4">
    <original>K</original>
    <variation>KTFCVLQ</variation>
    <location>
        <position position="319"/>
    </location>
</feature>
<feature type="splice variant" id="VSP_038535" description="In isoform 2." evidence="5">
    <location>
        <position position="461"/>
    </location>
</feature>
<evidence type="ECO:0000250" key="1">
    <source>
        <dbReference type="UniProtKB" id="P30260"/>
    </source>
</evidence>
<evidence type="ECO:0000256" key="2">
    <source>
        <dbReference type="SAM" id="MobiDB-lite"/>
    </source>
</evidence>
<evidence type="ECO:0000269" key="3">
    <source>
    </source>
</evidence>
<evidence type="ECO:0000303" key="4">
    <source>
    </source>
</evidence>
<evidence type="ECO:0000305" key="5"/>